<comment type="function">
    <text evidence="1">Part of the ABC transporter complex PstSACB involved in phosphate import. Responsible for energy coupling to the transport system.</text>
</comment>
<comment type="catalytic activity">
    <reaction evidence="1">
        <text>phosphate(out) + ATP + H2O = ADP + 2 phosphate(in) + H(+)</text>
        <dbReference type="Rhea" id="RHEA:24440"/>
        <dbReference type="ChEBI" id="CHEBI:15377"/>
        <dbReference type="ChEBI" id="CHEBI:15378"/>
        <dbReference type="ChEBI" id="CHEBI:30616"/>
        <dbReference type="ChEBI" id="CHEBI:43474"/>
        <dbReference type="ChEBI" id="CHEBI:456216"/>
        <dbReference type="EC" id="7.3.2.1"/>
    </reaction>
</comment>
<comment type="subunit">
    <text evidence="1">The complex is composed of two ATP-binding proteins (PstB), two transmembrane proteins (PstC and PstA) and a solute-binding protein (PstS).</text>
</comment>
<comment type="subcellular location">
    <subcellularLocation>
        <location evidence="1">Cell membrane</location>
        <topology evidence="1">Peripheral membrane protein</topology>
    </subcellularLocation>
</comment>
<comment type="similarity">
    <text evidence="1">Belongs to the ABC transporter superfamily. Phosphate importer (TC 3.A.1.7) family.</text>
</comment>
<proteinExistence type="inferred from homology"/>
<organism>
    <name type="scientific">Mycobacterium tuberculosis (strain CDC 1551 / Oshkosh)</name>
    <dbReference type="NCBI Taxonomy" id="83331"/>
    <lineage>
        <taxon>Bacteria</taxon>
        <taxon>Bacillati</taxon>
        <taxon>Actinomycetota</taxon>
        <taxon>Actinomycetes</taxon>
        <taxon>Mycobacteriales</taxon>
        <taxon>Mycobacteriaceae</taxon>
        <taxon>Mycobacterium</taxon>
        <taxon>Mycobacterium tuberculosis complex</taxon>
    </lineage>
</organism>
<sequence length="276" mass="29996">MACERLGGQSGAADVDAAAPAMAAVNLTLGFAGKTVLDQVSMGFPARAVTSLMGPTGSGKTTFLRTLNRMNDKVSGYRYSGDVLLGGRSIFNYRDVLEFRRRVGMLFQRPNPFPMSIMDNVLAGVRAHKLVPRKEFRGVAQARLTEVGLWDAVKDRLSDSPFRLSGGQQQLLCLARTLAVNPEVLLLDEPTSALDPTTTEKIEEFIRSLADRLTVIIVTHNLAQAARISDRAALFFDGRLVEEGPTEQLFSSPKHAETARYVAGLSGDVKDAKRGN</sequence>
<feature type="chain" id="PRO_0000426758" description="Phosphate import ATP-binding protein PstB 2">
    <location>
        <begin position="1"/>
        <end position="276"/>
    </location>
</feature>
<feature type="domain" description="ABC transporter" evidence="1">
    <location>
        <begin position="22"/>
        <end position="262"/>
    </location>
</feature>
<feature type="binding site" evidence="1">
    <location>
        <begin position="54"/>
        <end position="61"/>
    </location>
    <ligand>
        <name>ATP</name>
        <dbReference type="ChEBI" id="CHEBI:30616"/>
    </ligand>
</feature>
<name>PSTB2_MYCTO</name>
<reference key="1">
    <citation type="journal article" date="2002" name="J. Bacteriol.">
        <title>Whole-genome comparison of Mycobacterium tuberculosis clinical and laboratory strains.</title>
        <authorList>
            <person name="Fleischmann R.D."/>
            <person name="Alland D."/>
            <person name="Eisen J.A."/>
            <person name="Carpenter L."/>
            <person name="White O."/>
            <person name="Peterson J.D."/>
            <person name="DeBoy R.T."/>
            <person name="Dodson R.J."/>
            <person name="Gwinn M.L."/>
            <person name="Haft D.H."/>
            <person name="Hickey E.K."/>
            <person name="Kolonay J.F."/>
            <person name="Nelson W.C."/>
            <person name="Umayam L.A."/>
            <person name="Ermolaeva M.D."/>
            <person name="Salzberg S.L."/>
            <person name="Delcher A."/>
            <person name="Utterback T.R."/>
            <person name="Weidman J.F."/>
            <person name="Khouri H.M."/>
            <person name="Gill J."/>
            <person name="Mikula A."/>
            <person name="Bishai W."/>
            <person name="Jacobs W.R. Jr."/>
            <person name="Venter J.C."/>
            <person name="Fraser C.M."/>
        </authorList>
    </citation>
    <scope>NUCLEOTIDE SEQUENCE [LARGE SCALE GENOMIC DNA]</scope>
    <source>
        <strain>CDC 1551 / Oshkosh</strain>
    </source>
</reference>
<gene>
    <name evidence="1" type="primary">pstB2</name>
    <name type="synonym">pstB</name>
    <name type="ordered locus">MT0960</name>
</gene>
<evidence type="ECO:0000255" key="1">
    <source>
        <dbReference type="HAMAP-Rule" id="MF_01702"/>
    </source>
</evidence>
<keyword id="KW-0067">ATP-binding</keyword>
<keyword id="KW-1003">Cell membrane</keyword>
<keyword id="KW-0472">Membrane</keyword>
<keyword id="KW-0547">Nucleotide-binding</keyword>
<keyword id="KW-0592">Phosphate transport</keyword>
<keyword id="KW-1185">Reference proteome</keyword>
<keyword id="KW-1278">Translocase</keyword>
<keyword id="KW-0813">Transport</keyword>
<dbReference type="EC" id="7.3.2.1" evidence="1"/>
<dbReference type="EMBL" id="AE000516">
    <property type="protein sequence ID" value="AAK45207.1"/>
    <property type="molecule type" value="Genomic_DNA"/>
</dbReference>
<dbReference type="PIR" id="E70584">
    <property type="entry name" value="E70584"/>
</dbReference>
<dbReference type="RefSeq" id="WP_003898653.1">
    <property type="nucleotide sequence ID" value="NZ_KK341227.1"/>
</dbReference>
<dbReference type="SMR" id="P9WQK8"/>
<dbReference type="KEGG" id="mtc:MT0960"/>
<dbReference type="PATRIC" id="fig|83331.31.peg.1030"/>
<dbReference type="HOGENOM" id="CLU_000604_1_22_11"/>
<dbReference type="Proteomes" id="UP000001020">
    <property type="component" value="Chromosome"/>
</dbReference>
<dbReference type="GO" id="GO:0005886">
    <property type="term" value="C:plasma membrane"/>
    <property type="evidence" value="ECO:0007669"/>
    <property type="project" value="UniProtKB-SubCell"/>
</dbReference>
<dbReference type="GO" id="GO:0005524">
    <property type="term" value="F:ATP binding"/>
    <property type="evidence" value="ECO:0007669"/>
    <property type="project" value="UniProtKB-KW"/>
</dbReference>
<dbReference type="GO" id="GO:0016887">
    <property type="term" value="F:ATP hydrolysis activity"/>
    <property type="evidence" value="ECO:0007669"/>
    <property type="project" value="InterPro"/>
</dbReference>
<dbReference type="GO" id="GO:0015415">
    <property type="term" value="F:ATPase-coupled phosphate ion transmembrane transporter activity"/>
    <property type="evidence" value="ECO:0007669"/>
    <property type="project" value="UniProtKB-EC"/>
</dbReference>
<dbReference type="GO" id="GO:0035435">
    <property type="term" value="P:phosphate ion transmembrane transport"/>
    <property type="evidence" value="ECO:0007669"/>
    <property type="project" value="InterPro"/>
</dbReference>
<dbReference type="CDD" id="cd03260">
    <property type="entry name" value="ABC_PstB_phosphate_transporter"/>
    <property type="match status" value="1"/>
</dbReference>
<dbReference type="Gene3D" id="3.40.50.300">
    <property type="entry name" value="P-loop containing nucleotide triphosphate hydrolases"/>
    <property type="match status" value="1"/>
</dbReference>
<dbReference type="InterPro" id="IPR003593">
    <property type="entry name" value="AAA+_ATPase"/>
</dbReference>
<dbReference type="InterPro" id="IPR003439">
    <property type="entry name" value="ABC_transporter-like_ATP-bd"/>
</dbReference>
<dbReference type="InterPro" id="IPR017871">
    <property type="entry name" value="ABC_transporter-like_CS"/>
</dbReference>
<dbReference type="InterPro" id="IPR027417">
    <property type="entry name" value="P-loop_NTPase"/>
</dbReference>
<dbReference type="InterPro" id="IPR005670">
    <property type="entry name" value="PstB-like"/>
</dbReference>
<dbReference type="NCBIfam" id="TIGR00972">
    <property type="entry name" value="3a0107s01c2"/>
    <property type="match status" value="1"/>
</dbReference>
<dbReference type="NCBIfam" id="NF010864">
    <property type="entry name" value="PRK14271.1"/>
    <property type="match status" value="1"/>
</dbReference>
<dbReference type="PANTHER" id="PTHR43423">
    <property type="entry name" value="ABC TRANSPORTER I FAMILY MEMBER 17"/>
    <property type="match status" value="1"/>
</dbReference>
<dbReference type="PANTHER" id="PTHR43423:SF1">
    <property type="entry name" value="ABC TRANSPORTER I FAMILY MEMBER 17"/>
    <property type="match status" value="1"/>
</dbReference>
<dbReference type="Pfam" id="PF00005">
    <property type="entry name" value="ABC_tran"/>
    <property type="match status" value="1"/>
</dbReference>
<dbReference type="SMART" id="SM00382">
    <property type="entry name" value="AAA"/>
    <property type="match status" value="1"/>
</dbReference>
<dbReference type="SUPFAM" id="SSF52540">
    <property type="entry name" value="P-loop containing nucleoside triphosphate hydrolases"/>
    <property type="match status" value="1"/>
</dbReference>
<dbReference type="PROSITE" id="PS00211">
    <property type="entry name" value="ABC_TRANSPORTER_1"/>
    <property type="match status" value="1"/>
</dbReference>
<dbReference type="PROSITE" id="PS50893">
    <property type="entry name" value="ABC_TRANSPORTER_2"/>
    <property type="match status" value="1"/>
</dbReference>
<dbReference type="PROSITE" id="PS51238">
    <property type="entry name" value="PSTB"/>
    <property type="match status" value="1"/>
</dbReference>
<protein>
    <recommendedName>
        <fullName evidence="1">Phosphate import ATP-binding protein PstB 2</fullName>
        <ecNumber evidence="1">7.3.2.1</ecNumber>
    </recommendedName>
    <alternativeName>
        <fullName evidence="1">ABC phosphate transporter 2</fullName>
    </alternativeName>
    <alternativeName>
        <fullName evidence="1">Phosphate-transporting ATPase 2</fullName>
    </alternativeName>
</protein>
<accession>P9WQK8</accession>
<accession>L0T5C0</accession>
<accession>O05869</accession>
<accession>P95302</accession>